<comment type="function">
    <text evidence="1">Peptide chain release factor 2 directs the termination of translation in response to the peptide chain termination codons UGA and UAA.</text>
</comment>
<comment type="subcellular location">
    <subcellularLocation>
        <location evidence="1">Cytoplasm</location>
    </subcellularLocation>
</comment>
<comment type="PTM">
    <text evidence="1">Methylated by PrmC. Methylation increases the termination efficiency of RF2.</text>
</comment>
<comment type="similarity">
    <text evidence="1">Belongs to the prokaryotic/mitochondrial release factor family.</text>
</comment>
<gene>
    <name evidence="1" type="primary">prfB</name>
    <name type="ordered locus">Tlet_0699</name>
</gene>
<organism>
    <name type="scientific">Pseudothermotoga lettingae (strain ATCC BAA-301 / DSM 14385 / NBRC 107922 / TMO)</name>
    <name type="common">Thermotoga lettingae</name>
    <dbReference type="NCBI Taxonomy" id="416591"/>
    <lineage>
        <taxon>Bacteria</taxon>
        <taxon>Thermotogati</taxon>
        <taxon>Thermotogota</taxon>
        <taxon>Thermotogae</taxon>
        <taxon>Thermotogales</taxon>
        <taxon>Thermotogaceae</taxon>
        <taxon>Pseudothermotoga</taxon>
    </lineage>
</organism>
<keyword id="KW-0963">Cytoplasm</keyword>
<keyword id="KW-0488">Methylation</keyword>
<keyword id="KW-0648">Protein biosynthesis</keyword>
<keyword id="KW-1185">Reference proteome</keyword>
<feature type="chain" id="PRO_1000057626" description="Peptide chain release factor 2">
    <location>
        <begin position="1"/>
        <end position="367"/>
    </location>
</feature>
<feature type="modified residue" description="N5-methylglutamine" evidence="1">
    <location>
        <position position="249"/>
    </location>
</feature>
<proteinExistence type="inferred from homology"/>
<reference key="1">
    <citation type="submission" date="2007-08" db="EMBL/GenBank/DDBJ databases">
        <title>Complete sequence of Thermotoga lettingae TMO.</title>
        <authorList>
            <consortium name="US DOE Joint Genome Institute"/>
            <person name="Copeland A."/>
            <person name="Lucas S."/>
            <person name="Lapidus A."/>
            <person name="Barry K."/>
            <person name="Glavina del Rio T."/>
            <person name="Dalin E."/>
            <person name="Tice H."/>
            <person name="Pitluck S."/>
            <person name="Foster B."/>
            <person name="Bruce D."/>
            <person name="Schmutz J."/>
            <person name="Larimer F."/>
            <person name="Land M."/>
            <person name="Hauser L."/>
            <person name="Kyrpides N."/>
            <person name="Mikhailova N."/>
            <person name="Nelson K."/>
            <person name="Gogarten J.P."/>
            <person name="Noll K."/>
            <person name="Richardson P."/>
        </authorList>
    </citation>
    <scope>NUCLEOTIDE SEQUENCE [LARGE SCALE GENOMIC DNA]</scope>
    <source>
        <strain>ATCC BAA-301 / DSM 14385 / NBRC 107922 / TMO</strain>
    </source>
</reference>
<evidence type="ECO:0000255" key="1">
    <source>
        <dbReference type="HAMAP-Rule" id="MF_00094"/>
    </source>
</evidence>
<dbReference type="EMBL" id="CP000812">
    <property type="protein sequence ID" value="ABV33265.1"/>
    <property type="molecule type" value="Genomic_DNA"/>
</dbReference>
<dbReference type="RefSeq" id="WP_012002746.1">
    <property type="nucleotide sequence ID" value="NZ_BSDV01000001.1"/>
</dbReference>
<dbReference type="SMR" id="A8F531"/>
<dbReference type="STRING" id="416591.Tlet_0699"/>
<dbReference type="KEGG" id="tle:Tlet_0699"/>
<dbReference type="eggNOG" id="COG1186">
    <property type="taxonomic scope" value="Bacteria"/>
</dbReference>
<dbReference type="HOGENOM" id="CLU_036856_6_0_0"/>
<dbReference type="OrthoDB" id="9806673at2"/>
<dbReference type="Proteomes" id="UP000002016">
    <property type="component" value="Chromosome"/>
</dbReference>
<dbReference type="GO" id="GO:0005737">
    <property type="term" value="C:cytoplasm"/>
    <property type="evidence" value="ECO:0007669"/>
    <property type="project" value="UniProtKB-SubCell"/>
</dbReference>
<dbReference type="GO" id="GO:0016149">
    <property type="term" value="F:translation release factor activity, codon specific"/>
    <property type="evidence" value="ECO:0007669"/>
    <property type="project" value="UniProtKB-UniRule"/>
</dbReference>
<dbReference type="FunFam" id="3.30.160.20:FF:000010">
    <property type="entry name" value="Peptide chain release factor 2"/>
    <property type="match status" value="1"/>
</dbReference>
<dbReference type="Gene3D" id="3.30.160.20">
    <property type="match status" value="1"/>
</dbReference>
<dbReference type="Gene3D" id="3.30.70.1660">
    <property type="match status" value="1"/>
</dbReference>
<dbReference type="Gene3D" id="1.20.58.410">
    <property type="entry name" value="Release factor"/>
    <property type="match status" value="1"/>
</dbReference>
<dbReference type="HAMAP" id="MF_00094">
    <property type="entry name" value="Rel_fac_2"/>
    <property type="match status" value="1"/>
</dbReference>
<dbReference type="InterPro" id="IPR005139">
    <property type="entry name" value="PCRF"/>
</dbReference>
<dbReference type="InterPro" id="IPR000352">
    <property type="entry name" value="Pep_chain_release_fac_I"/>
</dbReference>
<dbReference type="InterPro" id="IPR045853">
    <property type="entry name" value="Pep_chain_release_fac_I_sf"/>
</dbReference>
<dbReference type="InterPro" id="IPR004374">
    <property type="entry name" value="PrfB"/>
</dbReference>
<dbReference type="NCBIfam" id="TIGR00020">
    <property type="entry name" value="prfB"/>
    <property type="match status" value="1"/>
</dbReference>
<dbReference type="PANTHER" id="PTHR43116:SF3">
    <property type="entry name" value="CLASS I PEPTIDE CHAIN RELEASE FACTOR"/>
    <property type="match status" value="1"/>
</dbReference>
<dbReference type="PANTHER" id="PTHR43116">
    <property type="entry name" value="PEPTIDE CHAIN RELEASE FACTOR 2"/>
    <property type="match status" value="1"/>
</dbReference>
<dbReference type="Pfam" id="PF03462">
    <property type="entry name" value="PCRF"/>
    <property type="match status" value="1"/>
</dbReference>
<dbReference type="Pfam" id="PF00472">
    <property type="entry name" value="RF-1"/>
    <property type="match status" value="1"/>
</dbReference>
<dbReference type="SMART" id="SM00937">
    <property type="entry name" value="PCRF"/>
    <property type="match status" value="1"/>
</dbReference>
<dbReference type="SUPFAM" id="SSF75620">
    <property type="entry name" value="Release factor"/>
    <property type="match status" value="1"/>
</dbReference>
<dbReference type="PROSITE" id="PS00745">
    <property type="entry name" value="RF_PROK_I"/>
    <property type="match status" value="1"/>
</dbReference>
<accession>A8F531</accession>
<sequence>MITYETRVKIDELREKYLNFVKLIDPDKLNMELKKMESEMSDPEIWKDQRKAGEISKKVRRIKELLSDISEIERNFEDIDVGIELSEEDPGIAQDIEKIVQEVEKNIRRFQLELILNDPLDQNNAYLSIHPGAGGTESHDWAQMLLRMYMRWAERKGFIVELLDFQPGEEAGLKSATILVKGEYAYGYLKHERGVHRLVRISPFDAAKRRHTSFASVNVVPEISDDIDVEIKPEDIRIDTFRASGHGGQYVNRTDSAVRITHLPTGIVVSCQSERSQHQNKALAMKVLKAKLYQLELAKRREQLDEIQGELKEISWGNQIRSYILQPYTLVKDHRTDIETGNFDAVLDGELDQFIEAELLYFADYKI</sequence>
<name>RF2_PSELT</name>
<protein>
    <recommendedName>
        <fullName evidence="1">Peptide chain release factor 2</fullName>
        <shortName evidence="1">RF-2</shortName>
    </recommendedName>
</protein>